<organism>
    <name type="scientific">Halobacterium salinarum (strain ATCC 29341 / DSM 671 / R1)</name>
    <dbReference type="NCBI Taxonomy" id="478009"/>
    <lineage>
        <taxon>Archaea</taxon>
        <taxon>Methanobacteriati</taxon>
        <taxon>Methanobacteriota</taxon>
        <taxon>Stenosarchaea group</taxon>
        <taxon>Halobacteria</taxon>
        <taxon>Halobacteriales</taxon>
        <taxon>Halobacteriaceae</taxon>
        <taxon>Halobacterium</taxon>
        <taxon>Halobacterium salinarum NRC-34001</taxon>
    </lineage>
</organism>
<proteinExistence type="inferred from homology"/>
<feature type="chain" id="PRO_1000120198" description="UPF0148 protein OE_4320R">
    <location>
        <begin position="1"/>
        <end position="182"/>
    </location>
</feature>
<feature type="region of interest" description="Disordered" evidence="2">
    <location>
        <begin position="1"/>
        <end position="162"/>
    </location>
</feature>
<feature type="compositionally biased region" description="Basic and acidic residues" evidence="2">
    <location>
        <begin position="7"/>
        <end position="33"/>
    </location>
</feature>
<feature type="compositionally biased region" description="Basic and acidic residues" evidence="2">
    <location>
        <begin position="47"/>
        <end position="62"/>
    </location>
</feature>
<feature type="compositionally biased region" description="Low complexity" evidence="2">
    <location>
        <begin position="105"/>
        <end position="122"/>
    </location>
</feature>
<feature type="compositionally biased region" description="Basic and acidic residues" evidence="2">
    <location>
        <begin position="153"/>
        <end position="162"/>
    </location>
</feature>
<protein>
    <recommendedName>
        <fullName evidence="1">UPF0148 protein OE_4320R</fullName>
    </recommendedName>
</protein>
<sequence>MSNTDDGFDKEAAREELREKYNADQQDREETARMSDLLLQGATMTNDHCDRCGTPLFRHDGETFCPTCQHDDNDDEPTATTQSAPDRSPPADPQATPHSSPPTTPDTSSSTAAATDDVPTAAARDRPEHAPTAEPTTPATEELESTIAALARRASDADDPRTAREYLEAAHEAAAALDTLRP</sequence>
<accession>B0R7P9</accession>
<name>Y4320_HALS3</name>
<comment type="similarity">
    <text evidence="1">Belongs to the UPF0148 family.</text>
</comment>
<gene>
    <name type="ordered locus">OE_4320R</name>
</gene>
<reference key="1">
    <citation type="journal article" date="2008" name="Genomics">
        <title>Evolution in the laboratory: the genome of Halobacterium salinarum strain R1 compared to that of strain NRC-1.</title>
        <authorList>
            <person name="Pfeiffer F."/>
            <person name="Schuster S.C."/>
            <person name="Broicher A."/>
            <person name="Falb M."/>
            <person name="Palm P."/>
            <person name="Rodewald K."/>
            <person name="Ruepp A."/>
            <person name="Soppa J."/>
            <person name="Tittor J."/>
            <person name="Oesterhelt D."/>
        </authorList>
    </citation>
    <scope>NUCLEOTIDE SEQUENCE [LARGE SCALE GENOMIC DNA]</scope>
    <source>
        <strain>ATCC 29341 / DSM 671 / R1</strain>
    </source>
</reference>
<dbReference type="EMBL" id="AM774415">
    <property type="protein sequence ID" value="CAP14768.1"/>
    <property type="molecule type" value="Genomic_DNA"/>
</dbReference>
<dbReference type="RefSeq" id="WP_010903764.1">
    <property type="nucleotide sequence ID" value="NC_010364.1"/>
</dbReference>
<dbReference type="SMR" id="B0R7P9"/>
<dbReference type="EnsemblBacteria" id="CAP14768">
    <property type="protein sequence ID" value="CAP14768"/>
    <property type="gene ID" value="OE_4320R"/>
</dbReference>
<dbReference type="KEGG" id="hsl:OE_4320R"/>
<dbReference type="HOGENOM" id="CLU_085607_0_0_2"/>
<dbReference type="Proteomes" id="UP000001321">
    <property type="component" value="Chromosome"/>
</dbReference>
<dbReference type="HAMAP" id="MF_00343">
    <property type="entry name" value="UPF0148"/>
    <property type="match status" value="1"/>
</dbReference>
<dbReference type="InterPro" id="IPR009563">
    <property type="entry name" value="SSSCA1"/>
</dbReference>
<dbReference type="InterPro" id="IPR022954">
    <property type="entry name" value="UPF0148"/>
</dbReference>
<dbReference type="InterPro" id="IPR051888">
    <property type="entry name" value="UPF0148_domain"/>
</dbReference>
<dbReference type="PANTHER" id="PTHR16537:SF1">
    <property type="entry name" value="PROTEIN ZNRD2"/>
    <property type="match status" value="1"/>
</dbReference>
<dbReference type="PANTHER" id="PTHR16537">
    <property type="entry name" value="SJOEGREN SYNDROME/SCLERODERMA AUTOANTIGEN 1"/>
    <property type="match status" value="1"/>
</dbReference>
<dbReference type="Pfam" id="PF06677">
    <property type="entry name" value="Auto_anti-p27"/>
    <property type="match status" value="1"/>
</dbReference>
<evidence type="ECO:0000255" key="1">
    <source>
        <dbReference type="HAMAP-Rule" id="MF_00343"/>
    </source>
</evidence>
<evidence type="ECO:0000256" key="2">
    <source>
        <dbReference type="SAM" id="MobiDB-lite"/>
    </source>
</evidence>